<accession>D3INW7</accession>
<gene>
    <name type="primary">SLC14A1</name>
</gene>
<reference key="1">
    <citation type="submission" date="2009-05" db="EMBL/GenBank/DDBJ databases">
        <title>Effect of tea polyphenols on nitrogen metabolism of growing goats.</title>
        <authorList>
            <person name="Zeng J.Y."/>
            <person name="Zhong R.Z."/>
            <person name="Tan C.Y."/>
            <person name="Tang S.X."/>
            <person name="Han X.F."/>
            <person name="Xu Q."/>
            <person name="Yan Q.X."/>
            <person name="Wang M."/>
            <person name="Zhou C.S."/>
            <person name="Yuan Z.Q."/>
            <person name="Tan Z.L."/>
        </authorList>
    </citation>
    <scope>NUCLEOTIDE SEQUENCE [MRNA]</scope>
</reference>
<keyword id="KW-1003">Cell membrane</keyword>
<keyword id="KW-0325">Glycoprotein</keyword>
<keyword id="KW-0472">Membrane</keyword>
<keyword id="KW-1185">Reference proteome</keyword>
<keyword id="KW-0812">Transmembrane</keyword>
<keyword id="KW-1133">Transmembrane helix</keyword>
<keyword id="KW-0813">Transport</keyword>
<comment type="function">
    <text evidence="3">Mediates the transport of urea driven by a concentration gradient across the cell membranes of erythrocytes and the renal inner medullary collecting duct which is critical to the urinary concentrating mechanism (By similarity). Facilitates water transport in erythrocytes (By similarity).</text>
</comment>
<comment type="catalytic activity">
    <reaction evidence="1">
        <text>urea(in) = urea(out)</text>
        <dbReference type="Rhea" id="RHEA:32799"/>
        <dbReference type="ChEBI" id="CHEBI:16199"/>
    </reaction>
</comment>
<comment type="subunit">
    <text evidence="1 2">Homotrimer; each subunit contains a pore through which urea permeates (By similarity). Identified in a complex with STOM (By similarity).</text>
</comment>
<comment type="subcellular location">
    <subcellularLocation>
        <location evidence="3">Cell membrane</location>
        <topology evidence="4">Multi-pass membrane protein</topology>
    </subcellularLocation>
    <subcellularLocation>
        <location evidence="3">Basolateral cell membrane</location>
        <topology evidence="4">Multi-pass membrane protein</topology>
    </subcellularLocation>
    <text evidence="3">Restricted to the basolateral membrane in various portions of the urothelium.</text>
</comment>
<comment type="similarity">
    <text evidence="6">Belongs to the urea transporter family.</text>
</comment>
<feature type="chain" id="PRO_0000410963" description="Urea transporter 1">
    <location>
        <begin position="1"/>
        <end position="384"/>
    </location>
</feature>
<feature type="transmembrane region" description="Helical" evidence="4">
    <location>
        <begin position="61"/>
        <end position="81"/>
    </location>
</feature>
<feature type="transmembrane region" description="Helical" evidence="4">
    <location>
        <begin position="85"/>
        <end position="105"/>
    </location>
</feature>
<feature type="transmembrane region" description="Helical" evidence="4">
    <location>
        <begin position="111"/>
        <end position="131"/>
    </location>
</feature>
<feature type="transmembrane region" description="Helical" evidence="4">
    <location>
        <begin position="138"/>
        <end position="158"/>
    </location>
</feature>
<feature type="transmembrane region" description="Helical" evidence="4">
    <location>
        <begin position="168"/>
        <end position="188"/>
    </location>
</feature>
<feature type="transmembrane region" description="Helical" evidence="4">
    <location>
        <begin position="237"/>
        <end position="257"/>
    </location>
</feature>
<feature type="transmembrane region" description="Helical" evidence="4">
    <location>
        <begin position="279"/>
        <end position="299"/>
    </location>
</feature>
<feature type="transmembrane region" description="Helical" evidence="4">
    <location>
        <begin position="327"/>
        <end position="347"/>
    </location>
</feature>
<feature type="region of interest" description="Disordered" evidence="5">
    <location>
        <begin position="1"/>
        <end position="23"/>
    </location>
</feature>
<feature type="site" description="Important for channel permeability" evidence="2">
    <location>
        <position position="334"/>
    </location>
</feature>
<feature type="glycosylation site" description="N-linked (GlcNAc...) asparagine" evidence="4">
    <location>
        <position position="206"/>
    </location>
</feature>
<organism>
    <name type="scientific">Capra hircus</name>
    <name type="common">Goat</name>
    <dbReference type="NCBI Taxonomy" id="9925"/>
    <lineage>
        <taxon>Eukaryota</taxon>
        <taxon>Metazoa</taxon>
        <taxon>Chordata</taxon>
        <taxon>Craniata</taxon>
        <taxon>Vertebrata</taxon>
        <taxon>Euteleostomi</taxon>
        <taxon>Mammalia</taxon>
        <taxon>Eutheria</taxon>
        <taxon>Laurasiatheria</taxon>
        <taxon>Artiodactyla</taxon>
        <taxon>Ruminantia</taxon>
        <taxon>Pecora</taxon>
        <taxon>Bovidae</taxon>
        <taxon>Caprinae</taxon>
        <taxon>Capra</taxon>
    </lineage>
</organism>
<proteinExistence type="evidence at transcript level"/>
<evidence type="ECO:0000250" key="1">
    <source>
        <dbReference type="UniProtKB" id="Q13336"/>
    </source>
</evidence>
<evidence type="ECO:0000250" key="2">
    <source>
        <dbReference type="UniProtKB" id="Q5QF96"/>
    </source>
</evidence>
<evidence type="ECO:0000250" key="3">
    <source>
        <dbReference type="UniProtKB" id="Q8VHL0"/>
    </source>
</evidence>
<evidence type="ECO:0000255" key="4"/>
<evidence type="ECO:0000256" key="5">
    <source>
        <dbReference type="SAM" id="MobiDB-lite"/>
    </source>
</evidence>
<evidence type="ECO:0000305" key="6"/>
<dbReference type="EMBL" id="GQ148778">
    <property type="protein sequence ID" value="ADB79799.1"/>
    <property type="molecule type" value="mRNA"/>
</dbReference>
<dbReference type="RefSeq" id="XP_005697222.1">
    <property type="nucleotide sequence ID" value="XM_005697165.3"/>
</dbReference>
<dbReference type="SMR" id="D3INW7"/>
<dbReference type="STRING" id="9925.ENSCHIP00000002595"/>
<dbReference type="GlyCosmos" id="D3INW7">
    <property type="glycosylation" value="1 site, No reported glycans"/>
</dbReference>
<dbReference type="Ensembl" id="ENSCHIT00000008263.1">
    <property type="protein sequence ID" value="ENSCHIP00000002601.1"/>
    <property type="gene ID" value="ENSCHIG00000006085.1"/>
</dbReference>
<dbReference type="Ensembl" id="ENSCHIT00000008300.1">
    <property type="protein sequence ID" value="ENSCHIP00000002608.1"/>
    <property type="gene ID" value="ENSCHIG00000006085.1"/>
</dbReference>
<dbReference type="GeneID" id="100860878"/>
<dbReference type="KEGG" id="chx:100860878"/>
<dbReference type="CTD" id="6563"/>
<dbReference type="GeneTree" id="ENSGT00390000018729"/>
<dbReference type="OMA" id="WRVCIEL"/>
<dbReference type="OrthoDB" id="426293at2759"/>
<dbReference type="Proteomes" id="UP000291000">
    <property type="component" value="Chromosome 24"/>
</dbReference>
<dbReference type="Proteomes" id="UP000694566">
    <property type="component" value="Unplaced"/>
</dbReference>
<dbReference type="Bgee" id="ENSCHIG00000006085">
    <property type="expression patterns" value="Expressed in testis and 12 other cell types or tissues"/>
</dbReference>
<dbReference type="GO" id="GO:0016323">
    <property type="term" value="C:basolateral plasma membrane"/>
    <property type="evidence" value="ECO:0000250"/>
    <property type="project" value="UniProtKB"/>
</dbReference>
<dbReference type="GO" id="GO:0005886">
    <property type="term" value="C:plasma membrane"/>
    <property type="evidence" value="ECO:0000250"/>
    <property type="project" value="UniProtKB"/>
</dbReference>
<dbReference type="GO" id="GO:0015265">
    <property type="term" value="F:urea channel activity"/>
    <property type="evidence" value="ECO:0000250"/>
    <property type="project" value="UniProtKB"/>
</dbReference>
<dbReference type="GO" id="GO:0015204">
    <property type="term" value="F:urea transmembrane transporter activity"/>
    <property type="evidence" value="ECO:0000250"/>
    <property type="project" value="UniProtKB"/>
</dbReference>
<dbReference type="GO" id="GO:0071918">
    <property type="term" value="P:urea transmembrane transport"/>
    <property type="evidence" value="ECO:0000250"/>
    <property type="project" value="UniProtKB"/>
</dbReference>
<dbReference type="FunFam" id="1.10.3430.10:FF:000002">
    <property type="entry name" value="urea transporter 2"/>
    <property type="match status" value="1"/>
</dbReference>
<dbReference type="Gene3D" id="1.10.3430.10">
    <property type="entry name" value="Ammonium transporter AmtB like domains"/>
    <property type="match status" value="1"/>
</dbReference>
<dbReference type="InterPro" id="IPR029020">
    <property type="entry name" value="Ammonium/urea_transptr"/>
</dbReference>
<dbReference type="InterPro" id="IPR004937">
    <property type="entry name" value="Urea_transporter"/>
</dbReference>
<dbReference type="PANTHER" id="PTHR10464">
    <property type="entry name" value="UREA TRANSPORTER"/>
    <property type="match status" value="1"/>
</dbReference>
<dbReference type="PANTHER" id="PTHR10464:SF5">
    <property type="entry name" value="UREA TRANSPORTER 1"/>
    <property type="match status" value="1"/>
</dbReference>
<dbReference type="Pfam" id="PF03253">
    <property type="entry name" value="UT"/>
    <property type="match status" value="1"/>
</dbReference>
<dbReference type="PIRSF" id="PIRSF016502">
    <property type="entry name" value="Urea_transporter"/>
    <property type="match status" value="1"/>
</dbReference>
<protein>
    <recommendedName>
        <fullName>Urea transporter 1</fullName>
    </recommendedName>
    <alternativeName>
        <fullName>Solute carrier family 14 member 1</fullName>
    </alternativeName>
    <alternativeName>
        <fullName>Urea transporter B</fullName>
        <shortName>UT-B</shortName>
    </alternativeName>
    <alternativeName>
        <fullName>Urea transporter, erythrocyte</fullName>
    </alternativeName>
</protein>
<sequence>MDDNPTAVKLDQGGNQAPQGQGRRRLPKALGYITGDMKEFANWLKDKPQALQFVDWVLRGISQVVFVSNPISGILILVGLLVQNPWCALNGCVGTVVSTLTALLLNQDRSAITAGLQGYNATLVGILMAIYSDKGNYFWWLLFPVSAMSMTCPIFSSALNSVLSKWDLPVFTLPFNMALSMYLSATGHYNPFFPSTLVTPVTSVPNVTWPDLSALQLLKSLPVGVGQIYGCDNPWAGGIFLGAILLSSPLMCLHAAIGSLLGIIAGLSLSAPFENIYAGLWGFNSSLACIAIGGMFMALTWQTHLLALACALFTAYLGASMSHVMAVVGLPSCTWPFCLATLLFLLLTTKNPNIYKMPISKVTYPEENRIFYLQSTKRTVQGPL</sequence>
<name>UT1_CAPHI</name>